<organism>
    <name type="scientific">Bovine herpesvirus 1.2 (strain ST)</name>
    <name type="common">BoHV-1</name>
    <name type="synonym">Infectious bovine rhinotracheitis virus</name>
    <dbReference type="NCBI Taxonomy" id="45407"/>
    <lineage>
        <taxon>Viruses</taxon>
        <taxon>Duplodnaviria</taxon>
        <taxon>Heunggongvirae</taxon>
        <taxon>Peploviricota</taxon>
        <taxon>Herviviricetes</taxon>
        <taxon>Herpesvirales</taxon>
        <taxon>Orthoherpesviridae</taxon>
        <taxon>Alphaherpesvirinae</taxon>
        <taxon>Varicellovirus</taxon>
        <taxon>Varicellovirus bovinealpha1</taxon>
    </lineage>
</organism>
<sequence>MVTIVTCADRRGAFPGASPDVPARVWRFLAEQSRALTASRLGTTVVVFDRALVKTAAGCTSTSTSTPAAGWLLSTQRPWPAPGGAGLARHRQPAERVSVVGGYNLLNSGRAGARPFHMWVFGAADLYAPIFAHIAATTRLVYAQLDCTFAGAAWRLPRRGPAIASPWPPYDTPALPELVAGGVLLRLVYEVVDRGAAPRPAKREPPCPGGLPPGAPCAIL</sequence>
<feature type="chain" id="PRO_0000116130" description="Protein US2 homolog">
    <location>
        <begin position="1"/>
        <end position="220"/>
    </location>
</feature>
<reference key="1">
    <citation type="journal article" date="1994" name="Virology">
        <title>The complete DNA sequence and the genetic organization of the short unique region (US) of the bovine herpesvirus type 1 (ST strain).</title>
        <authorList>
            <person name="Leung-Tack P."/>
            <person name="Audonnet J.F."/>
            <person name="Riviere M."/>
        </authorList>
    </citation>
    <scope>NUCLEOTIDE SEQUENCE [GENOMIC DNA]</scope>
</reference>
<proteinExistence type="inferred from homology"/>
<accession>Q08099</accession>
<organismHost>
    <name type="scientific">Bos taurus</name>
    <name type="common">Bovine</name>
    <dbReference type="NCBI Taxonomy" id="9913"/>
</organismHost>
<name>US02_BHV1S</name>
<comment type="similarity">
    <text evidence="1">Belongs to the herpesviridae US2 family.</text>
</comment>
<protein>
    <recommendedName>
        <fullName>Protein US2 homolog</fullName>
    </recommendedName>
</protein>
<evidence type="ECO:0000305" key="1"/>
<dbReference type="EMBL" id="Z23068">
    <property type="protein sequence ID" value="CAA80609.1"/>
    <property type="molecule type" value="Genomic_DNA"/>
</dbReference>
<dbReference type="PIR" id="S35789">
    <property type="entry name" value="S35789"/>
</dbReference>
<dbReference type="InterPro" id="IPR003485">
    <property type="entry name" value="Herpes_US2_varicellovirus"/>
</dbReference>
<dbReference type="Pfam" id="PF02476">
    <property type="entry name" value="US2"/>
    <property type="match status" value="1"/>
</dbReference>